<keyword id="KW-0021">Allosteric enzyme</keyword>
<keyword id="KW-0067">ATP-binding</keyword>
<keyword id="KW-0963">Cytoplasm</keyword>
<keyword id="KW-0418">Kinase</keyword>
<keyword id="KW-0547">Nucleotide-binding</keyword>
<keyword id="KW-0665">Pyrimidine biosynthesis</keyword>
<keyword id="KW-0808">Transferase</keyword>
<comment type="function">
    <text evidence="1">Catalyzes the reversible phosphorylation of UMP to UDP.</text>
</comment>
<comment type="catalytic activity">
    <reaction evidence="1">
        <text>UMP + ATP = UDP + ADP</text>
        <dbReference type="Rhea" id="RHEA:24400"/>
        <dbReference type="ChEBI" id="CHEBI:30616"/>
        <dbReference type="ChEBI" id="CHEBI:57865"/>
        <dbReference type="ChEBI" id="CHEBI:58223"/>
        <dbReference type="ChEBI" id="CHEBI:456216"/>
        <dbReference type="EC" id="2.7.4.22"/>
    </reaction>
</comment>
<comment type="activity regulation">
    <text evidence="1">Allosterically activated by GTP. Inhibited by UTP.</text>
</comment>
<comment type="pathway">
    <text evidence="1">Pyrimidine metabolism; CTP biosynthesis via de novo pathway; UDP from UMP (UMPK route): step 1/1.</text>
</comment>
<comment type="subunit">
    <text evidence="1">Homohexamer.</text>
</comment>
<comment type="subcellular location">
    <subcellularLocation>
        <location evidence="1">Cytoplasm</location>
    </subcellularLocation>
</comment>
<comment type="similarity">
    <text evidence="1">Belongs to the UMP kinase family.</text>
</comment>
<gene>
    <name evidence="1" type="primary">pyrH</name>
</gene>
<reference key="1">
    <citation type="submission" date="2002-02" db="EMBL/GenBank/DDBJ databases">
        <title>Genetics of isoprenoid biosynthesis in Paracoccus zeaxanthinifaciens.</title>
        <authorList>
            <person name="Huembelin M."/>
        </authorList>
    </citation>
    <scope>NUCLEOTIDE SEQUENCE [GENOMIC DNA]</scope>
    <source>
        <strain>R114</strain>
    </source>
</reference>
<feature type="chain" id="PRO_0000143869" description="Uridylate kinase">
    <location>
        <begin position="1"/>
        <end position="241"/>
    </location>
</feature>
<feature type="region of interest" description="Involved in allosteric activation by GTP" evidence="1">
    <location>
        <begin position="23"/>
        <end position="28"/>
    </location>
</feature>
<feature type="binding site" evidence="1">
    <location>
        <begin position="15"/>
        <end position="18"/>
    </location>
    <ligand>
        <name>ATP</name>
        <dbReference type="ChEBI" id="CHEBI:30616"/>
    </ligand>
</feature>
<feature type="binding site" evidence="1">
    <location>
        <position position="57"/>
    </location>
    <ligand>
        <name>UMP</name>
        <dbReference type="ChEBI" id="CHEBI:57865"/>
    </ligand>
</feature>
<feature type="binding site" evidence="1">
    <location>
        <position position="58"/>
    </location>
    <ligand>
        <name>ATP</name>
        <dbReference type="ChEBI" id="CHEBI:30616"/>
    </ligand>
</feature>
<feature type="binding site" evidence="1">
    <location>
        <position position="62"/>
    </location>
    <ligand>
        <name>ATP</name>
        <dbReference type="ChEBI" id="CHEBI:30616"/>
    </ligand>
</feature>
<feature type="binding site" evidence="1">
    <location>
        <position position="77"/>
    </location>
    <ligand>
        <name>UMP</name>
        <dbReference type="ChEBI" id="CHEBI:57865"/>
    </ligand>
</feature>
<feature type="binding site" evidence="1">
    <location>
        <begin position="138"/>
        <end position="145"/>
    </location>
    <ligand>
        <name>UMP</name>
        <dbReference type="ChEBI" id="CHEBI:57865"/>
    </ligand>
</feature>
<feature type="binding site" evidence="1">
    <location>
        <position position="165"/>
    </location>
    <ligand>
        <name>ATP</name>
        <dbReference type="ChEBI" id="CHEBI:30616"/>
    </ligand>
</feature>
<feature type="binding site" evidence="1">
    <location>
        <position position="171"/>
    </location>
    <ligand>
        <name>ATP</name>
        <dbReference type="ChEBI" id="CHEBI:30616"/>
    </ligand>
</feature>
<feature type="binding site" evidence="1">
    <location>
        <position position="174"/>
    </location>
    <ligand>
        <name>ATP</name>
        <dbReference type="ChEBI" id="CHEBI:30616"/>
    </ligand>
</feature>
<organism>
    <name type="scientific">Paracoccus zeaxanthinifaciens</name>
    <dbReference type="NCBI Taxonomy" id="187400"/>
    <lineage>
        <taxon>Bacteria</taxon>
        <taxon>Pseudomonadati</taxon>
        <taxon>Pseudomonadota</taxon>
        <taxon>Alphaproteobacteria</taxon>
        <taxon>Rhodobacterales</taxon>
        <taxon>Paracoccaceae</taxon>
        <taxon>Paracoccus</taxon>
    </lineage>
</organism>
<name>PYRH_PARZE</name>
<evidence type="ECO:0000255" key="1">
    <source>
        <dbReference type="HAMAP-Rule" id="MF_01220"/>
    </source>
</evidence>
<dbReference type="EC" id="2.7.4.22" evidence="1"/>
<dbReference type="EMBL" id="AJ431698">
    <property type="protein sequence ID" value="CAD24428.1"/>
    <property type="molecule type" value="Genomic_DNA"/>
</dbReference>
<dbReference type="SMR" id="P59005"/>
<dbReference type="UniPathway" id="UPA00159">
    <property type="reaction ID" value="UER00275"/>
</dbReference>
<dbReference type="GO" id="GO:0005737">
    <property type="term" value="C:cytoplasm"/>
    <property type="evidence" value="ECO:0007669"/>
    <property type="project" value="UniProtKB-SubCell"/>
</dbReference>
<dbReference type="GO" id="GO:0005524">
    <property type="term" value="F:ATP binding"/>
    <property type="evidence" value="ECO:0007669"/>
    <property type="project" value="UniProtKB-KW"/>
</dbReference>
<dbReference type="GO" id="GO:0033862">
    <property type="term" value="F:UMP kinase activity"/>
    <property type="evidence" value="ECO:0007669"/>
    <property type="project" value="UniProtKB-EC"/>
</dbReference>
<dbReference type="GO" id="GO:0044210">
    <property type="term" value="P:'de novo' CTP biosynthetic process"/>
    <property type="evidence" value="ECO:0007669"/>
    <property type="project" value="UniProtKB-UniRule"/>
</dbReference>
<dbReference type="GO" id="GO:0006225">
    <property type="term" value="P:UDP biosynthetic process"/>
    <property type="evidence" value="ECO:0007669"/>
    <property type="project" value="TreeGrafter"/>
</dbReference>
<dbReference type="CDD" id="cd04254">
    <property type="entry name" value="AAK_UMPK-PyrH-Ec"/>
    <property type="match status" value="1"/>
</dbReference>
<dbReference type="FunFam" id="3.40.1160.10:FF:000001">
    <property type="entry name" value="Uridylate kinase"/>
    <property type="match status" value="1"/>
</dbReference>
<dbReference type="Gene3D" id="3.40.1160.10">
    <property type="entry name" value="Acetylglutamate kinase-like"/>
    <property type="match status" value="1"/>
</dbReference>
<dbReference type="HAMAP" id="MF_01220_B">
    <property type="entry name" value="PyrH_B"/>
    <property type="match status" value="1"/>
</dbReference>
<dbReference type="InterPro" id="IPR036393">
    <property type="entry name" value="AceGlu_kinase-like_sf"/>
</dbReference>
<dbReference type="InterPro" id="IPR001048">
    <property type="entry name" value="Asp/Glu/Uridylate_kinase"/>
</dbReference>
<dbReference type="InterPro" id="IPR011817">
    <property type="entry name" value="Uridylate_kinase"/>
</dbReference>
<dbReference type="InterPro" id="IPR015963">
    <property type="entry name" value="Uridylate_kinase_bac"/>
</dbReference>
<dbReference type="NCBIfam" id="TIGR02075">
    <property type="entry name" value="pyrH_bact"/>
    <property type="match status" value="1"/>
</dbReference>
<dbReference type="PANTHER" id="PTHR42833">
    <property type="entry name" value="URIDYLATE KINASE"/>
    <property type="match status" value="1"/>
</dbReference>
<dbReference type="PANTHER" id="PTHR42833:SF4">
    <property type="entry name" value="URIDYLATE KINASE PUMPKIN, CHLOROPLASTIC"/>
    <property type="match status" value="1"/>
</dbReference>
<dbReference type="Pfam" id="PF00696">
    <property type="entry name" value="AA_kinase"/>
    <property type="match status" value="1"/>
</dbReference>
<dbReference type="PIRSF" id="PIRSF005650">
    <property type="entry name" value="Uridylate_kin"/>
    <property type="match status" value="1"/>
</dbReference>
<dbReference type="SUPFAM" id="SSF53633">
    <property type="entry name" value="Carbamate kinase-like"/>
    <property type="match status" value="1"/>
</dbReference>
<accession>P59005</accession>
<protein>
    <recommendedName>
        <fullName evidence="1">Uridylate kinase</fullName>
        <shortName evidence="1">UK</shortName>
        <ecNumber evidence="1">2.7.4.22</ecNumber>
    </recommendedName>
    <alternativeName>
        <fullName evidence="1">Uridine monophosphate kinase</fullName>
        <shortName evidence="1">UMP kinase</shortName>
        <shortName evidence="1">UMPK</shortName>
    </alternativeName>
</protein>
<proteinExistence type="inferred from homology"/>
<sequence>MTSETPKQYGRVMLKISGEALMGDQGFGLNPPTVARIANEVDSVAKMGVEVCMVIGGGNIFRGLQGSAQGMERTTADYMGMLATVMNALAMQSALEALGHHCRVISAIRMDEVCEPYIRRRAIRHLEKKRIVIFAAGTGNPYFTTDTAATLRASEMNCEAIFKGTKVDGVYDKDPVKHADAKRYGDVSYDEVLQKHLGVMDASAIALARDNKLPIIVFSLDAPGGFRSILAGSGTYTRVHV</sequence>